<organism>
    <name type="scientific">Desulfitobacterium hafniense (strain DSM 10664 / DCB-2)</name>
    <dbReference type="NCBI Taxonomy" id="272564"/>
    <lineage>
        <taxon>Bacteria</taxon>
        <taxon>Bacillati</taxon>
        <taxon>Bacillota</taxon>
        <taxon>Clostridia</taxon>
        <taxon>Eubacteriales</taxon>
        <taxon>Desulfitobacteriaceae</taxon>
        <taxon>Desulfitobacterium</taxon>
    </lineage>
</organism>
<feature type="chain" id="PRO_1000165399" description="Small ribosomal subunit protein uS4">
    <location>
        <begin position="1"/>
        <end position="208"/>
    </location>
</feature>
<feature type="domain" description="S4 RNA-binding" evidence="1">
    <location>
        <begin position="99"/>
        <end position="165"/>
    </location>
</feature>
<keyword id="KW-0687">Ribonucleoprotein</keyword>
<keyword id="KW-0689">Ribosomal protein</keyword>
<keyword id="KW-0694">RNA-binding</keyword>
<keyword id="KW-0699">rRNA-binding</keyword>
<evidence type="ECO:0000255" key="1">
    <source>
        <dbReference type="HAMAP-Rule" id="MF_01306"/>
    </source>
</evidence>
<evidence type="ECO:0000305" key="2"/>
<comment type="function">
    <text evidence="1">One of the primary rRNA binding proteins, it binds directly to 16S rRNA where it nucleates assembly of the body of the 30S subunit.</text>
</comment>
<comment type="function">
    <text evidence="1">With S5 and S12 plays an important role in translational accuracy.</text>
</comment>
<comment type="subunit">
    <text evidence="1">Part of the 30S ribosomal subunit. Contacts protein S5. The interaction surface between S4 and S5 is involved in control of translational fidelity.</text>
</comment>
<comment type="similarity">
    <text evidence="1">Belongs to the universal ribosomal protein uS4 family.</text>
</comment>
<sequence>MARYTGPVCRLCRREGMKLFLKGDRCYTGKCAIDRRAYAPGQHGQSRGKKPTEYGIQLREKQKVRRIYGVQEKQFRSYYDKANRQKGIVGENLLRLLERRLDNVVFQLGFATSRPEARQLVRHGHFTINGRRVDIPSFLVRVGDVVGVKEASKSSPRLKEILSSLDRTPPKWMSLDANAATGTIIALPDREDIQLPIQEHLIVEKYSR</sequence>
<name>RS4_DESHD</name>
<protein>
    <recommendedName>
        <fullName evidence="1">Small ribosomal subunit protein uS4</fullName>
    </recommendedName>
    <alternativeName>
        <fullName evidence="2">30S ribosomal protein S4</fullName>
    </alternativeName>
</protein>
<dbReference type="EMBL" id="CP001336">
    <property type="protein sequence ID" value="ACL18516.1"/>
    <property type="molecule type" value="Genomic_DNA"/>
</dbReference>
<dbReference type="RefSeq" id="WP_015942768.1">
    <property type="nucleotide sequence ID" value="NC_011830.1"/>
</dbReference>
<dbReference type="SMR" id="B8G1Z3"/>
<dbReference type="KEGG" id="dhd:Dhaf_0449"/>
<dbReference type="HOGENOM" id="CLU_092403_0_2_9"/>
<dbReference type="Proteomes" id="UP000007726">
    <property type="component" value="Chromosome"/>
</dbReference>
<dbReference type="GO" id="GO:0015935">
    <property type="term" value="C:small ribosomal subunit"/>
    <property type="evidence" value="ECO:0007669"/>
    <property type="project" value="InterPro"/>
</dbReference>
<dbReference type="GO" id="GO:0019843">
    <property type="term" value="F:rRNA binding"/>
    <property type="evidence" value="ECO:0007669"/>
    <property type="project" value="UniProtKB-UniRule"/>
</dbReference>
<dbReference type="GO" id="GO:0003735">
    <property type="term" value="F:structural constituent of ribosome"/>
    <property type="evidence" value="ECO:0007669"/>
    <property type="project" value="InterPro"/>
</dbReference>
<dbReference type="GO" id="GO:0042274">
    <property type="term" value="P:ribosomal small subunit biogenesis"/>
    <property type="evidence" value="ECO:0007669"/>
    <property type="project" value="TreeGrafter"/>
</dbReference>
<dbReference type="GO" id="GO:0006412">
    <property type="term" value="P:translation"/>
    <property type="evidence" value="ECO:0007669"/>
    <property type="project" value="UniProtKB-UniRule"/>
</dbReference>
<dbReference type="CDD" id="cd00165">
    <property type="entry name" value="S4"/>
    <property type="match status" value="1"/>
</dbReference>
<dbReference type="FunFam" id="1.10.1050.10:FF:000001">
    <property type="entry name" value="30S ribosomal protein S4"/>
    <property type="match status" value="1"/>
</dbReference>
<dbReference type="FunFam" id="3.10.290.10:FF:000001">
    <property type="entry name" value="30S ribosomal protein S4"/>
    <property type="match status" value="1"/>
</dbReference>
<dbReference type="Gene3D" id="1.10.1050.10">
    <property type="entry name" value="Ribosomal Protein S4 Delta 41, Chain A, domain 1"/>
    <property type="match status" value="1"/>
</dbReference>
<dbReference type="Gene3D" id="3.10.290.10">
    <property type="entry name" value="RNA-binding S4 domain"/>
    <property type="match status" value="1"/>
</dbReference>
<dbReference type="HAMAP" id="MF_01306_B">
    <property type="entry name" value="Ribosomal_uS4_B"/>
    <property type="match status" value="1"/>
</dbReference>
<dbReference type="InterPro" id="IPR022801">
    <property type="entry name" value="Ribosomal_uS4"/>
</dbReference>
<dbReference type="InterPro" id="IPR005709">
    <property type="entry name" value="Ribosomal_uS4_bac-type"/>
</dbReference>
<dbReference type="InterPro" id="IPR001912">
    <property type="entry name" value="Ribosomal_uS4_N"/>
</dbReference>
<dbReference type="InterPro" id="IPR002942">
    <property type="entry name" value="S4_RNA-bd"/>
</dbReference>
<dbReference type="InterPro" id="IPR036986">
    <property type="entry name" value="S4_RNA-bd_sf"/>
</dbReference>
<dbReference type="NCBIfam" id="NF003717">
    <property type="entry name" value="PRK05327.1"/>
    <property type="match status" value="1"/>
</dbReference>
<dbReference type="NCBIfam" id="TIGR01017">
    <property type="entry name" value="rpsD_bact"/>
    <property type="match status" value="1"/>
</dbReference>
<dbReference type="PANTHER" id="PTHR11831">
    <property type="entry name" value="30S 40S RIBOSOMAL PROTEIN"/>
    <property type="match status" value="1"/>
</dbReference>
<dbReference type="PANTHER" id="PTHR11831:SF4">
    <property type="entry name" value="SMALL RIBOSOMAL SUBUNIT PROTEIN US4M"/>
    <property type="match status" value="1"/>
</dbReference>
<dbReference type="Pfam" id="PF00163">
    <property type="entry name" value="Ribosomal_S4"/>
    <property type="match status" value="1"/>
</dbReference>
<dbReference type="Pfam" id="PF01479">
    <property type="entry name" value="S4"/>
    <property type="match status" value="1"/>
</dbReference>
<dbReference type="SMART" id="SM01390">
    <property type="entry name" value="Ribosomal_S4"/>
    <property type="match status" value="1"/>
</dbReference>
<dbReference type="SMART" id="SM00363">
    <property type="entry name" value="S4"/>
    <property type="match status" value="1"/>
</dbReference>
<dbReference type="SUPFAM" id="SSF55174">
    <property type="entry name" value="Alpha-L RNA-binding motif"/>
    <property type="match status" value="1"/>
</dbReference>
<dbReference type="PROSITE" id="PS50889">
    <property type="entry name" value="S4"/>
    <property type="match status" value="1"/>
</dbReference>
<gene>
    <name evidence="1" type="primary">rpsD</name>
    <name type="ordered locus">Dhaf_0449</name>
</gene>
<reference key="1">
    <citation type="journal article" date="2012" name="BMC Microbiol.">
        <title>Genome sequence of Desulfitobacterium hafniense DCB-2, a Gram-positive anaerobe capable of dehalogenation and metal reduction.</title>
        <authorList>
            <person name="Kim S.H."/>
            <person name="Harzman C."/>
            <person name="Davis J.K."/>
            <person name="Hutcheson R."/>
            <person name="Broderick J.B."/>
            <person name="Marsh T.L."/>
            <person name="Tiedje J.M."/>
        </authorList>
    </citation>
    <scope>NUCLEOTIDE SEQUENCE [LARGE SCALE GENOMIC DNA]</scope>
    <source>
        <strain>DSM 10664 / DCB-2</strain>
    </source>
</reference>
<accession>B8G1Z3</accession>
<proteinExistence type="inferred from homology"/>